<accession>Q9KTX8</accession>
<organism>
    <name type="scientific">Vibrio cholerae serotype O1 (strain ATCC 39315 / El Tor Inaba N16961)</name>
    <dbReference type="NCBI Taxonomy" id="243277"/>
    <lineage>
        <taxon>Bacteria</taxon>
        <taxon>Pseudomonadati</taxon>
        <taxon>Pseudomonadota</taxon>
        <taxon>Gammaproteobacteria</taxon>
        <taxon>Vibrionales</taxon>
        <taxon>Vibrionaceae</taxon>
        <taxon>Vibrio</taxon>
    </lineage>
</organism>
<comment type="function">
    <text evidence="1">Probable chaperone. Has a low intrinsic ATPase activity which is markedly stimulated by HscB (By similarity).</text>
</comment>
<comment type="similarity">
    <text evidence="2">Belongs to the heat shock protein 70 family.</text>
</comment>
<name>HSCA_VIBCH</name>
<evidence type="ECO:0000250" key="1"/>
<evidence type="ECO:0000255" key="2">
    <source>
        <dbReference type="HAMAP-Rule" id="MF_00679"/>
    </source>
</evidence>
<reference key="1">
    <citation type="journal article" date="2000" name="Nature">
        <title>DNA sequence of both chromosomes of the cholera pathogen Vibrio cholerae.</title>
        <authorList>
            <person name="Heidelberg J.F."/>
            <person name="Eisen J.A."/>
            <person name="Nelson W.C."/>
            <person name="Clayton R.A."/>
            <person name="Gwinn M.L."/>
            <person name="Dodson R.J."/>
            <person name="Haft D.H."/>
            <person name="Hickey E.K."/>
            <person name="Peterson J.D."/>
            <person name="Umayam L.A."/>
            <person name="Gill S.R."/>
            <person name="Nelson K.E."/>
            <person name="Read T.D."/>
            <person name="Tettelin H."/>
            <person name="Richardson D.L."/>
            <person name="Ermolaeva M.D."/>
            <person name="Vamathevan J.J."/>
            <person name="Bass S."/>
            <person name="Qin H."/>
            <person name="Dragoi I."/>
            <person name="Sellers P."/>
            <person name="McDonald L.A."/>
            <person name="Utterback T.R."/>
            <person name="Fleischmann R.D."/>
            <person name="Nierman W.C."/>
            <person name="White O."/>
            <person name="Salzberg S.L."/>
            <person name="Smith H.O."/>
            <person name="Colwell R.R."/>
            <person name="Mekalanos J.J."/>
            <person name="Venter J.C."/>
            <person name="Fraser C.M."/>
        </authorList>
    </citation>
    <scope>NUCLEOTIDE SEQUENCE [LARGE SCALE GENOMIC DNA]</scope>
    <source>
        <strain>ATCC 39315 / El Tor Inaba N16961</strain>
    </source>
</reference>
<sequence length="616" mass="65838">MALLQIAEPGQSSAPHQHKLAAGIDLGTTNSLVASVRSGTASTLVDSQGRSILPSVVNYGADATRVGYPAREQAETDPHNTVISVKRLLGRSLQDINQRYPHLPYRFKASEKGLPIVQTAQGDKNPIQISADILKALAERATATLGGELAGVVITVPAYFDDAQRVATKDAAALAGLHVLRLLNEPTAAAIAYGLDSGQEGVIAVYDLGGGTFDISILRLSRGVFEVLATGGDSALGGDDFDHLIADHLQAQIGLTSLTAEQQRALINAATQAKIDLTEYMTAELNVLGWQGSLTREELENLIAPLLKKTLLSCRRALKDAGVEADEVLEVVMVGGSTRTPFVREQVGEFFGRTPLTSINPDEVVAIGAAIQADILAGNKPDAEMLLLDVIPLSLGIETMGGLVEKIIPRNTTIPVARAQEFTTFKDGQTAMSVHVVQGEREMVDDCRSLARFSLKGIPPMAAGAAHIRVTYQVDADGLLSVTALEKSTGVQAEIQVKPSYGLSDDEVTQMLKDSMAYAKEDMLARALAEQRVEADRVIEGLVSALQADGDELLNEQERQTLLQAIERLIELRNGDNADAIEQGIKDTDKASQDFASRRMDKSIRSALAGHSVDEI</sequence>
<proteinExistence type="inferred from homology"/>
<dbReference type="EMBL" id="AE003852">
    <property type="protein sequence ID" value="AAF93917.1"/>
    <property type="molecule type" value="Genomic_DNA"/>
</dbReference>
<dbReference type="PIR" id="C82286">
    <property type="entry name" value="C82286"/>
</dbReference>
<dbReference type="RefSeq" id="NP_230401.1">
    <property type="nucleotide sequence ID" value="NC_002505.1"/>
</dbReference>
<dbReference type="RefSeq" id="WP_001196560.1">
    <property type="nucleotide sequence ID" value="NZ_LT906614.1"/>
</dbReference>
<dbReference type="SMR" id="Q9KTX8"/>
<dbReference type="STRING" id="243277.VC_0752"/>
<dbReference type="DNASU" id="2615761"/>
<dbReference type="EnsemblBacteria" id="AAF93917">
    <property type="protein sequence ID" value="AAF93917"/>
    <property type="gene ID" value="VC_0752"/>
</dbReference>
<dbReference type="KEGG" id="vch:VC_0752"/>
<dbReference type="PATRIC" id="fig|243277.26.peg.716"/>
<dbReference type="eggNOG" id="COG0443">
    <property type="taxonomic scope" value="Bacteria"/>
</dbReference>
<dbReference type="HOGENOM" id="CLU_005965_2_1_6"/>
<dbReference type="Proteomes" id="UP000000584">
    <property type="component" value="Chromosome 1"/>
</dbReference>
<dbReference type="GO" id="GO:0005829">
    <property type="term" value="C:cytosol"/>
    <property type="evidence" value="ECO:0000318"/>
    <property type="project" value="GO_Central"/>
</dbReference>
<dbReference type="GO" id="GO:0005524">
    <property type="term" value="F:ATP binding"/>
    <property type="evidence" value="ECO:0007669"/>
    <property type="project" value="UniProtKB-KW"/>
</dbReference>
<dbReference type="GO" id="GO:0016887">
    <property type="term" value="F:ATP hydrolysis activity"/>
    <property type="evidence" value="ECO:0000318"/>
    <property type="project" value="GO_Central"/>
</dbReference>
<dbReference type="GO" id="GO:0140662">
    <property type="term" value="F:ATP-dependent protein folding chaperone"/>
    <property type="evidence" value="ECO:0007669"/>
    <property type="project" value="InterPro"/>
</dbReference>
<dbReference type="GO" id="GO:0031072">
    <property type="term" value="F:heat shock protein binding"/>
    <property type="evidence" value="ECO:0000318"/>
    <property type="project" value="GO_Central"/>
</dbReference>
<dbReference type="GO" id="GO:0044183">
    <property type="term" value="F:protein folding chaperone"/>
    <property type="evidence" value="ECO:0000318"/>
    <property type="project" value="GO_Central"/>
</dbReference>
<dbReference type="GO" id="GO:0051082">
    <property type="term" value="F:unfolded protein binding"/>
    <property type="evidence" value="ECO:0007669"/>
    <property type="project" value="InterPro"/>
</dbReference>
<dbReference type="GO" id="GO:0051085">
    <property type="term" value="P:chaperone cofactor-dependent protein refolding"/>
    <property type="evidence" value="ECO:0000318"/>
    <property type="project" value="GO_Central"/>
</dbReference>
<dbReference type="GO" id="GO:0016226">
    <property type="term" value="P:iron-sulfur cluster assembly"/>
    <property type="evidence" value="ECO:0007669"/>
    <property type="project" value="InterPro"/>
</dbReference>
<dbReference type="GO" id="GO:0042026">
    <property type="term" value="P:protein refolding"/>
    <property type="evidence" value="ECO:0000318"/>
    <property type="project" value="GO_Central"/>
</dbReference>
<dbReference type="CDD" id="cd10236">
    <property type="entry name" value="ASKHA_NBD_HSP70_HscA"/>
    <property type="match status" value="1"/>
</dbReference>
<dbReference type="FunFam" id="3.30.420.40:FF:000046">
    <property type="entry name" value="Chaperone protein HscA"/>
    <property type="match status" value="1"/>
</dbReference>
<dbReference type="FunFam" id="2.60.34.10:FF:000005">
    <property type="entry name" value="Chaperone protein HscA homolog"/>
    <property type="match status" value="1"/>
</dbReference>
<dbReference type="Gene3D" id="1.20.1270.10">
    <property type="match status" value="1"/>
</dbReference>
<dbReference type="Gene3D" id="3.30.420.40">
    <property type="match status" value="2"/>
</dbReference>
<dbReference type="Gene3D" id="3.90.640.10">
    <property type="entry name" value="Actin, Chain A, domain 4"/>
    <property type="match status" value="1"/>
</dbReference>
<dbReference type="Gene3D" id="2.60.34.10">
    <property type="entry name" value="Substrate Binding Domain Of DNAk, Chain A, domain 1"/>
    <property type="match status" value="1"/>
</dbReference>
<dbReference type="HAMAP" id="MF_00679">
    <property type="entry name" value="HscA"/>
    <property type="match status" value="1"/>
</dbReference>
<dbReference type="InterPro" id="IPR043129">
    <property type="entry name" value="ATPase_NBD"/>
</dbReference>
<dbReference type="InterPro" id="IPR018181">
    <property type="entry name" value="Heat_shock_70_CS"/>
</dbReference>
<dbReference type="InterPro" id="IPR042039">
    <property type="entry name" value="HscA_NBD"/>
</dbReference>
<dbReference type="InterPro" id="IPR029048">
    <property type="entry name" value="HSP70_C_sf"/>
</dbReference>
<dbReference type="InterPro" id="IPR029047">
    <property type="entry name" value="HSP70_peptide-bd_sf"/>
</dbReference>
<dbReference type="InterPro" id="IPR013126">
    <property type="entry name" value="Hsp_70_fam"/>
</dbReference>
<dbReference type="InterPro" id="IPR010236">
    <property type="entry name" value="ISC_FeS_clus_asmbl_HscA"/>
</dbReference>
<dbReference type="NCBIfam" id="TIGR01991">
    <property type="entry name" value="HscA"/>
    <property type="match status" value="1"/>
</dbReference>
<dbReference type="NCBIfam" id="NF003520">
    <property type="entry name" value="PRK05183.1"/>
    <property type="match status" value="1"/>
</dbReference>
<dbReference type="PANTHER" id="PTHR19375">
    <property type="entry name" value="HEAT SHOCK PROTEIN 70KDA"/>
    <property type="match status" value="1"/>
</dbReference>
<dbReference type="Pfam" id="PF00012">
    <property type="entry name" value="HSP70"/>
    <property type="match status" value="1"/>
</dbReference>
<dbReference type="PRINTS" id="PR00301">
    <property type="entry name" value="HEATSHOCK70"/>
</dbReference>
<dbReference type="SUPFAM" id="SSF53067">
    <property type="entry name" value="Actin-like ATPase domain"/>
    <property type="match status" value="2"/>
</dbReference>
<dbReference type="SUPFAM" id="SSF100934">
    <property type="entry name" value="Heat shock protein 70kD (HSP70), C-terminal subdomain"/>
    <property type="match status" value="1"/>
</dbReference>
<dbReference type="SUPFAM" id="SSF100920">
    <property type="entry name" value="Heat shock protein 70kD (HSP70), peptide-binding domain"/>
    <property type="match status" value="1"/>
</dbReference>
<dbReference type="PROSITE" id="PS00297">
    <property type="entry name" value="HSP70_1"/>
    <property type="match status" value="1"/>
</dbReference>
<dbReference type="PROSITE" id="PS00329">
    <property type="entry name" value="HSP70_2"/>
    <property type="match status" value="1"/>
</dbReference>
<gene>
    <name evidence="2" type="primary">hscA</name>
    <name type="ordered locus">VC_0752</name>
</gene>
<feature type="chain" id="PRO_0000078651" description="Chaperone protein HscA homolog">
    <location>
        <begin position="1"/>
        <end position="616"/>
    </location>
</feature>
<protein>
    <recommendedName>
        <fullName evidence="2">Chaperone protein HscA homolog</fullName>
    </recommendedName>
</protein>
<keyword id="KW-0067">ATP-binding</keyword>
<keyword id="KW-0143">Chaperone</keyword>
<keyword id="KW-0547">Nucleotide-binding</keyword>
<keyword id="KW-1185">Reference proteome</keyword>